<sequence length="77" mass="8654">MKLIIFTGLVLFAIVSLIEAEEESGRVCIPLNGECSKSPDKCCDNINCDCYLRFEKGVQAGRPCFCTEKDVIFERDE</sequence>
<keyword id="KW-1015">Disulfide bond</keyword>
<keyword id="KW-0964">Secreted</keyword>
<keyword id="KW-0732">Signal</keyword>
<keyword id="KW-0800">Toxin</keyword>
<dbReference type="EMBL" id="EU926089">
    <property type="protein sequence ID" value="ACI41421.1"/>
    <property type="molecule type" value="mRNA"/>
</dbReference>
<dbReference type="EMBL" id="FM864093">
    <property type="protein sequence ID" value="CAS03690.1"/>
    <property type="molecule type" value="mRNA"/>
</dbReference>
<dbReference type="SMR" id="B6DD05"/>
<dbReference type="ArachnoServer" id="AS001028">
    <property type="toxin name" value="U10-lycotoxin-Ls1b"/>
</dbReference>
<dbReference type="GO" id="GO:0005576">
    <property type="term" value="C:extracellular region"/>
    <property type="evidence" value="ECO:0007669"/>
    <property type="project" value="UniProtKB-SubCell"/>
</dbReference>
<dbReference type="GO" id="GO:0008200">
    <property type="term" value="F:ion channel inhibitor activity"/>
    <property type="evidence" value="ECO:0007669"/>
    <property type="project" value="InterPro"/>
</dbReference>
<dbReference type="GO" id="GO:0090729">
    <property type="term" value="F:toxin activity"/>
    <property type="evidence" value="ECO:0007669"/>
    <property type="project" value="UniProtKB-KW"/>
</dbReference>
<dbReference type="CDD" id="cd12960">
    <property type="entry name" value="Spider_toxin"/>
    <property type="match status" value="1"/>
</dbReference>
<dbReference type="InterPro" id="IPR019553">
    <property type="entry name" value="Spider_toxin_CSTX_knottin"/>
</dbReference>
<dbReference type="InterPro" id="IPR004169">
    <property type="entry name" value="Spidertoxin"/>
</dbReference>
<dbReference type="Pfam" id="PF10530">
    <property type="entry name" value="Toxin_35"/>
    <property type="match status" value="1"/>
</dbReference>
<comment type="subcellular location">
    <subcellularLocation>
        <location evidence="1">Secreted</location>
    </subcellularLocation>
</comment>
<comment type="tissue specificity">
    <text>Expressed by the venom gland.</text>
</comment>
<comment type="PTM">
    <text evidence="1">Contains 4 disulfide bonds.</text>
</comment>
<comment type="similarity">
    <text evidence="3">Belongs to the neurotoxin 19 (CSTX) family. 09 (U10-Lctx) subfamily.</text>
</comment>
<feature type="signal peptide" evidence="2">
    <location>
        <begin position="1"/>
        <end position="20"/>
    </location>
</feature>
<feature type="propeptide" id="PRO_0000401827" evidence="1">
    <location>
        <begin position="21"/>
        <end position="26"/>
    </location>
</feature>
<feature type="chain" id="PRO_0000401828" description="U10-lycotoxin-Ls1b">
    <location>
        <begin position="27"/>
        <end position="77"/>
    </location>
</feature>
<organism>
    <name type="scientific">Lycosa singoriensis</name>
    <name type="common">Wolf spider</name>
    <name type="synonym">Aranea singoriensis</name>
    <dbReference type="NCBI Taxonomy" id="434756"/>
    <lineage>
        <taxon>Eukaryota</taxon>
        <taxon>Metazoa</taxon>
        <taxon>Ecdysozoa</taxon>
        <taxon>Arthropoda</taxon>
        <taxon>Chelicerata</taxon>
        <taxon>Arachnida</taxon>
        <taxon>Araneae</taxon>
        <taxon>Araneomorphae</taxon>
        <taxon>Entelegynae</taxon>
        <taxon>Lycosoidea</taxon>
        <taxon>Lycosidae</taxon>
        <taxon>Lycosa</taxon>
    </lineage>
</organism>
<protein>
    <recommendedName>
        <fullName>U10-lycotoxin-Ls1b</fullName>
    </recommendedName>
    <alternativeName>
        <fullName>Toxin-like structure LSTX-J3</fullName>
    </alternativeName>
</protein>
<accession>B6DD05</accession>
<name>TXA03_LYCSI</name>
<evidence type="ECO:0000250" key="1"/>
<evidence type="ECO:0000255" key="2"/>
<evidence type="ECO:0000305" key="3"/>
<proteinExistence type="evidence at transcript level"/>
<reference key="1">
    <citation type="journal article" date="2010" name="Zoology">
        <title>Transcriptome analysis of the venom glands of the Chinese wolf spider Lycosa singoriensis.</title>
        <authorList>
            <person name="Zhang Y."/>
            <person name="Chen J."/>
            <person name="Tang X."/>
            <person name="Wang F."/>
            <person name="Jiang L."/>
            <person name="Xiong X."/>
            <person name="Wang M."/>
            <person name="Rong M."/>
            <person name="Liu Z."/>
            <person name="Liang S."/>
        </authorList>
    </citation>
    <scope>NUCLEOTIDE SEQUENCE [LARGE SCALE MRNA]</scope>
    <source>
        <tissue>Venom gland</tissue>
    </source>
</reference>